<dbReference type="EMBL" id="CP000056">
    <property type="protein sequence ID" value="AAX71929.1"/>
    <property type="molecule type" value="Genomic_DNA"/>
</dbReference>
<dbReference type="RefSeq" id="WP_011284774.1">
    <property type="nucleotide sequence ID" value="NC_007296.2"/>
</dbReference>
<dbReference type="SMR" id="Q48TN1"/>
<dbReference type="KEGG" id="spb:M28_Spy0816"/>
<dbReference type="HOGENOM" id="CLU_073529_0_2_9"/>
<dbReference type="GO" id="GO:0046872">
    <property type="term" value="F:metal ion binding"/>
    <property type="evidence" value="ECO:0007669"/>
    <property type="project" value="UniProtKB-KW"/>
</dbReference>
<dbReference type="GO" id="GO:0008237">
    <property type="term" value="F:metallopeptidase activity"/>
    <property type="evidence" value="ECO:0007669"/>
    <property type="project" value="UniProtKB-KW"/>
</dbReference>
<dbReference type="GO" id="GO:0006508">
    <property type="term" value="P:proteolysis"/>
    <property type="evidence" value="ECO:0007669"/>
    <property type="project" value="UniProtKB-KW"/>
</dbReference>
<dbReference type="CDD" id="cd08071">
    <property type="entry name" value="MPN_DUF2466"/>
    <property type="match status" value="1"/>
</dbReference>
<dbReference type="Gene3D" id="3.40.140.10">
    <property type="entry name" value="Cytidine Deaminase, domain 2"/>
    <property type="match status" value="1"/>
</dbReference>
<dbReference type="InterPro" id="IPR037518">
    <property type="entry name" value="MPN"/>
</dbReference>
<dbReference type="InterPro" id="IPR025657">
    <property type="entry name" value="RadC_JAB"/>
</dbReference>
<dbReference type="InterPro" id="IPR010994">
    <property type="entry name" value="RuvA_2-like"/>
</dbReference>
<dbReference type="InterPro" id="IPR001405">
    <property type="entry name" value="UPF0758"/>
</dbReference>
<dbReference type="InterPro" id="IPR020891">
    <property type="entry name" value="UPF0758_CS"/>
</dbReference>
<dbReference type="InterPro" id="IPR046778">
    <property type="entry name" value="UPF0758_N"/>
</dbReference>
<dbReference type="NCBIfam" id="NF000642">
    <property type="entry name" value="PRK00024.1"/>
    <property type="match status" value="1"/>
</dbReference>
<dbReference type="NCBIfam" id="TIGR00608">
    <property type="entry name" value="radc"/>
    <property type="match status" value="1"/>
</dbReference>
<dbReference type="PANTHER" id="PTHR30471">
    <property type="entry name" value="DNA REPAIR PROTEIN RADC"/>
    <property type="match status" value="1"/>
</dbReference>
<dbReference type="PANTHER" id="PTHR30471:SF3">
    <property type="entry name" value="UPF0758 PROTEIN YEES-RELATED"/>
    <property type="match status" value="1"/>
</dbReference>
<dbReference type="Pfam" id="PF04002">
    <property type="entry name" value="RadC"/>
    <property type="match status" value="1"/>
</dbReference>
<dbReference type="Pfam" id="PF20582">
    <property type="entry name" value="UPF0758_N"/>
    <property type="match status" value="1"/>
</dbReference>
<dbReference type="SUPFAM" id="SSF47781">
    <property type="entry name" value="RuvA domain 2-like"/>
    <property type="match status" value="1"/>
</dbReference>
<dbReference type="PROSITE" id="PS50249">
    <property type="entry name" value="MPN"/>
    <property type="match status" value="1"/>
</dbReference>
<dbReference type="PROSITE" id="PS01302">
    <property type="entry name" value="UPF0758"/>
    <property type="match status" value="1"/>
</dbReference>
<protein>
    <recommendedName>
        <fullName>UPF0758 protein M28_Spy0816</fullName>
    </recommendedName>
</protein>
<feature type="chain" id="PRO_1000089864" description="UPF0758 protein M28_Spy0816">
    <location>
        <begin position="1"/>
        <end position="226"/>
    </location>
</feature>
<feature type="domain" description="MPN" evidence="1">
    <location>
        <begin position="103"/>
        <end position="225"/>
    </location>
</feature>
<feature type="short sequence motif" description="JAMM motif" evidence="1">
    <location>
        <begin position="174"/>
        <end position="187"/>
    </location>
</feature>
<feature type="binding site" evidence="1">
    <location>
        <position position="174"/>
    </location>
    <ligand>
        <name>Zn(2+)</name>
        <dbReference type="ChEBI" id="CHEBI:29105"/>
        <note>catalytic</note>
    </ligand>
</feature>
<feature type="binding site" evidence="1">
    <location>
        <position position="176"/>
    </location>
    <ligand>
        <name>Zn(2+)</name>
        <dbReference type="ChEBI" id="CHEBI:29105"/>
        <note>catalytic</note>
    </ligand>
</feature>
<feature type="binding site" evidence="1">
    <location>
        <position position="187"/>
    </location>
    <ligand>
        <name>Zn(2+)</name>
        <dbReference type="ChEBI" id="CHEBI:29105"/>
        <note>catalytic</note>
    </ligand>
</feature>
<proteinExistence type="inferred from homology"/>
<sequence>MYSIKCDDNKAMPRERLMRLGAESLSNQELLAILLRTGNKEKHVLELSSYLLSHLDSLADFKKMSLQELQHLAGIGKVKAIEIKAMIELVSRILATDKTLTDSVLTSVQVAEKMMAALGDKKQEHLVVLYLDNQNRIFEEKTIFIGTVRRSLAEPREILYYACKNMATSLIVIHNHPSGNIEPSSNDYCFTEKIKRSCEDLGIICLDHIIVSYKDYYSFREKSTLF</sequence>
<name>Y816_STRPM</name>
<reference key="1">
    <citation type="journal article" date="2005" name="J. Infect. Dis.">
        <title>Genome sequence of a serotype M28 strain of group A Streptococcus: potential new insights into puerperal sepsis and bacterial disease specificity.</title>
        <authorList>
            <person name="Green N.M."/>
            <person name="Zhang S."/>
            <person name="Porcella S.F."/>
            <person name="Nagiec M.J."/>
            <person name="Barbian K.D."/>
            <person name="Beres S.B."/>
            <person name="Lefebvre R.B."/>
            <person name="Musser J.M."/>
        </authorList>
    </citation>
    <scope>NUCLEOTIDE SEQUENCE [LARGE SCALE GENOMIC DNA]</scope>
    <source>
        <strain>MGAS6180</strain>
    </source>
</reference>
<organism>
    <name type="scientific">Streptococcus pyogenes serotype M28 (strain MGAS6180)</name>
    <dbReference type="NCBI Taxonomy" id="319701"/>
    <lineage>
        <taxon>Bacteria</taxon>
        <taxon>Bacillati</taxon>
        <taxon>Bacillota</taxon>
        <taxon>Bacilli</taxon>
        <taxon>Lactobacillales</taxon>
        <taxon>Streptococcaceae</taxon>
        <taxon>Streptococcus</taxon>
    </lineage>
</organism>
<keyword id="KW-0378">Hydrolase</keyword>
<keyword id="KW-0479">Metal-binding</keyword>
<keyword id="KW-0482">Metalloprotease</keyword>
<keyword id="KW-0645">Protease</keyword>
<keyword id="KW-0862">Zinc</keyword>
<accession>Q48TN1</accession>
<evidence type="ECO:0000255" key="1">
    <source>
        <dbReference type="PROSITE-ProRule" id="PRU01182"/>
    </source>
</evidence>
<evidence type="ECO:0000305" key="2"/>
<comment type="similarity">
    <text evidence="2">Belongs to the UPF0758 family.</text>
</comment>
<gene>
    <name type="ordered locus">M28_Spy0816</name>
</gene>